<accession>Q08595</accession>
<proteinExistence type="inferred from homology"/>
<feature type="chain" id="PRO_0000222264" description="Nuclear shuttle protein">
    <location>
        <begin position="1"/>
        <end position="260"/>
    </location>
</feature>
<feature type="region of interest" description="Disordered" evidence="2">
    <location>
        <begin position="1"/>
        <end position="29"/>
    </location>
</feature>
<feature type="region of interest" description="Interaction with Arabidopsis thaliana NSI protein" evidence="1">
    <location>
        <begin position="154"/>
        <end position="191"/>
    </location>
</feature>
<feature type="short sequence motif" description="Bipartite nuclear localization signal" evidence="1">
    <location>
        <begin position="21"/>
        <end position="42"/>
    </location>
</feature>
<feature type="short sequence motif" description="Nuclear localization signal" evidence="1">
    <location>
        <begin position="84"/>
        <end position="100"/>
    </location>
</feature>
<evidence type="ECO:0000250" key="1"/>
<evidence type="ECO:0000256" key="2">
    <source>
        <dbReference type="SAM" id="MobiDB-lite"/>
    </source>
</evidence>
<evidence type="ECO:0000305" key="3"/>
<reference key="1">
    <citation type="journal article" date="1993" name="J. Gen. Virol.">
        <title>Nucleotide sequence evidence for the occurrence of three distinct whitefly-transmitted geminiviruses in cassava.</title>
        <authorList>
            <person name="Hong Y.G."/>
            <person name="Robinson D.J."/>
            <person name="Harrison B.D."/>
        </authorList>
    </citation>
    <scope>NUCLEOTIDE SEQUENCE [GENOMIC DNA]</scope>
</reference>
<comment type="function">
    <text evidence="1">Binds to the genomic viral ssDNA, shuttles it into and out of the cell nucleus. Begomoviruses use 2 proteins to transport their DNA from cell to cell. The nuclear shuttle protein (NSP) shuttles it between nucleus and cytoplasm and the movement protein (MP) probably transports the DNA-NSP complex to the cell periphery and facilitates movement across the cell wall (By similarity).</text>
</comment>
<comment type="subunit">
    <text evidence="1">Binds to single-stranded and double-stranded viral DNA. Interacts with the host nuclear shuttle interacting (NSI) protein. This interaction may allow NSP to recruit NSI monomers to the viral genome and thus regulate nuclear export of viral genome by NSP (By similarity).</text>
</comment>
<comment type="subcellular location">
    <subcellularLocation>
        <location evidence="1">Host nucleus</location>
    </subcellularLocation>
    <subcellularLocation>
        <location evidence="1">Host cytoplasm</location>
    </subcellularLocation>
    <subcellularLocation>
        <location evidence="1">Host cell membrane</location>
        <topology evidence="1">Peripheral membrane protein</topology>
        <orientation evidence="1">Cytoplasmic side</orientation>
    </subcellularLocation>
    <text evidence="1">Translocated to the plasma membrane by the movement protein BC1.</text>
</comment>
<comment type="similarity">
    <text evidence="3">Belongs to the begomovirus nuclear shuttle protein family.</text>
</comment>
<gene>
    <name type="ORF">BR1</name>
    <name type="ORF">BV1</name>
</gene>
<keyword id="KW-0238">DNA-binding</keyword>
<keyword id="KW-1032">Host cell membrane</keyword>
<keyword id="KW-1035">Host cytoplasm</keyword>
<keyword id="KW-1043">Host membrane</keyword>
<keyword id="KW-1048">Host nucleus</keyword>
<keyword id="KW-0945">Host-virus interaction</keyword>
<keyword id="KW-0472">Membrane</keyword>
<keyword id="KW-0813">Transport</keyword>
<keyword id="KW-0916">Viral movement protein</keyword>
<organism>
    <name type="scientific">Indian cassava mosaic virus</name>
    <name type="common">ICMV</name>
    <dbReference type="NCBI Taxonomy" id="31600"/>
    <lineage>
        <taxon>Viruses</taxon>
        <taxon>Monodnaviria</taxon>
        <taxon>Shotokuvirae</taxon>
        <taxon>Cressdnaviricota</taxon>
        <taxon>Repensiviricetes</taxon>
        <taxon>Geplafuvirales</taxon>
        <taxon>Geminiviridae</taxon>
        <taxon>Begomovirus</taxon>
    </lineage>
</organism>
<protein>
    <recommendedName>
        <fullName>Nuclear shuttle protein</fullName>
        <shortName>NSP</shortName>
    </recommendedName>
    <alternativeName>
        <fullName>Protein BR1</fullName>
    </alternativeName>
    <alternativeName>
        <fullName>Protein BV1</fullName>
    </alternativeName>
</protein>
<sequence>MRRGAYTPRSTPFPRDRRSYNAGKGRSFRSYRRRGPVRPLARRNLFGDDHARAFTYKTLSEDQFGPDFTIHNNNYKSSYISMPVKTRALSDNRVGDYIKLVNISFTGTVCIKNSQMESDGSPMLGLHGLFTCVLVRDKTPRIYSATEPLIPFPQLFGSINASYADLSIQDPYKDRFTVIRQVSYPVNTEKGDHMCRFKGTRRFGGRYPIWTSFKDDGGSGDSSGLYSNTYKNAILVYYVWLSDVSSQLEMYCKYVTRYIG</sequence>
<organismHost>
    <name type="scientific">Manihot esculenta</name>
    <name type="common">Cassava</name>
    <name type="synonym">Jatropha manihot</name>
    <dbReference type="NCBI Taxonomy" id="3983"/>
</organismHost>
<name>NSP_ICMV</name>
<dbReference type="EMBL" id="Z24759">
    <property type="protein sequence ID" value="CAA80892.1"/>
    <property type="molecule type" value="Genomic_DNA"/>
</dbReference>
<dbReference type="PIR" id="JQ2330">
    <property type="entry name" value="JQ2330"/>
</dbReference>
<dbReference type="RefSeq" id="NP_047235.1">
    <property type="nucleotide sequence ID" value="NC_001933.1"/>
</dbReference>
<dbReference type="GeneID" id="991062"/>
<dbReference type="KEGG" id="vg:991062"/>
<dbReference type="OrthoDB" id="8326at10239"/>
<dbReference type="Proteomes" id="UP000007210">
    <property type="component" value="Genome"/>
</dbReference>
<dbReference type="GO" id="GO:0043657">
    <property type="term" value="C:host cell"/>
    <property type="evidence" value="ECO:0007669"/>
    <property type="project" value="InterPro"/>
</dbReference>
<dbReference type="GO" id="GO:0030430">
    <property type="term" value="C:host cell cytoplasm"/>
    <property type="evidence" value="ECO:0007669"/>
    <property type="project" value="UniProtKB-SubCell"/>
</dbReference>
<dbReference type="GO" id="GO:0042025">
    <property type="term" value="C:host cell nucleus"/>
    <property type="evidence" value="ECO:0007669"/>
    <property type="project" value="UniProtKB-SubCell"/>
</dbReference>
<dbReference type="GO" id="GO:0020002">
    <property type="term" value="C:host cell plasma membrane"/>
    <property type="evidence" value="ECO:0007669"/>
    <property type="project" value="UniProtKB-SubCell"/>
</dbReference>
<dbReference type="GO" id="GO:0016020">
    <property type="term" value="C:membrane"/>
    <property type="evidence" value="ECO:0007669"/>
    <property type="project" value="UniProtKB-KW"/>
</dbReference>
<dbReference type="GO" id="GO:0019028">
    <property type="term" value="C:viral capsid"/>
    <property type="evidence" value="ECO:0007669"/>
    <property type="project" value="InterPro"/>
</dbReference>
<dbReference type="GO" id="GO:0003697">
    <property type="term" value="F:single-stranded DNA binding"/>
    <property type="evidence" value="ECO:0007669"/>
    <property type="project" value="InterPro"/>
</dbReference>
<dbReference type="GO" id="GO:0005198">
    <property type="term" value="F:structural molecule activity"/>
    <property type="evidence" value="ECO:0007669"/>
    <property type="project" value="InterPro"/>
</dbReference>
<dbReference type="GO" id="GO:0051027">
    <property type="term" value="P:DNA transport"/>
    <property type="evidence" value="ECO:0007669"/>
    <property type="project" value="InterPro"/>
</dbReference>
<dbReference type="GO" id="GO:0046740">
    <property type="term" value="P:transport of virus in host, cell to cell"/>
    <property type="evidence" value="ECO:0007669"/>
    <property type="project" value="UniProtKB-KW"/>
</dbReference>
<dbReference type="Gene3D" id="2.60.120.20">
    <property type="match status" value="1"/>
</dbReference>
<dbReference type="InterPro" id="IPR001530">
    <property type="entry name" value="Gemini_BR1"/>
</dbReference>
<dbReference type="InterPro" id="IPR000263">
    <property type="entry name" value="GV_A/BR1_coat"/>
</dbReference>
<dbReference type="InterPro" id="IPR029053">
    <property type="entry name" value="Viral_coat"/>
</dbReference>
<dbReference type="Pfam" id="PF00844">
    <property type="entry name" value="Gemini_coat"/>
    <property type="match status" value="1"/>
</dbReference>
<dbReference type="PRINTS" id="PR00225">
    <property type="entry name" value="GEMCOATBR1"/>
</dbReference>